<sequence>MSGERRLNGLSLKVGPLGEHDRLLTLLSDQEGVTRLAVPGARRPRSSLAAAVPLSLLELQVAGRRGLARVRQLKVLRSFNSVGKQLETLAAAQALAELSLMLVAGNDPLPGLLNTLLMHLERLEALSQAQPAQPNTTLACSVQACVHLLALGGYGLPVQECCRNGTALEPPLGQWEWRCSLMPEEGFAIGALPGAALQLNPSELALLQRLLRPALPMRRDGELMGPPEVWLRLLAVVECWIRTHLPHHMRALGMLREAIISSGDGRT</sequence>
<protein>
    <recommendedName>
        <fullName evidence="1">DNA repair protein RecO</fullName>
    </recommendedName>
    <alternativeName>
        <fullName evidence="1">Recombination protein O</fullName>
    </alternativeName>
</protein>
<reference key="1">
    <citation type="journal article" date="2007" name="PLoS Genet.">
        <title>Patterns and implications of gene gain and loss in the evolution of Prochlorococcus.</title>
        <authorList>
            <person name="Kettler G.C."/>
            <person name="Martiny A.C."/>
            <person name="Huang K."/>
            <person name="Zucker J."/>
            <person name="Coleman M.L."/>
            <person name="Rodrigue S."/>
            <person name="Chen F."/>
            <person name="Lapidus A."/>
            <person name="Ferriera S."/>
            <person name="Johnson J."/>
            <person name="Steglich C."/>
            <person name="Church G.M."/>
            <person name="Richardson P."/>
            <person name="Chisholm S.W."/>
        </authorList>
    </citation>
    <scope>NUCLEOTIDE SEQUENCE [LARGE SCALE GENOMIC DNA]</scope>
    <source>
        <strain>MIT 9303</strain>
    </source>
</reference>
<accession>A2CBL8</accession>
<name>RECO_PROM3</name>
<organism>
    <name type="scientific">Prochlorococcus marinus (strain MIT 9303)</name>
    <dbReference type="NCBI Taxonomy" id="59922"/>
    <lineage>
        <taxon>Bacteria</taxon>
        <taxon>Bacillati</taxon>
        <taxon>Cyanobacteriota</taxon>
        <taxon>Cyanophyceae</taxon>
        <taxon>Synechococcales</taxon>
        <taxon>Prochlorococcaceae</taxon>
        <taxon>Prochlorococcus</taxon>
    </lineage>
</organism>
<evidence type="ECO:0000255" key="1">
    <source>
        <dbReference type="HAMAP-Rule" id="MF_00201"/>
    </source>
</evidence>
<keyword id="KW-0227">DNA damage</keyword>
<keyword id="KW-0233">DNA recombination</keyword>
<keyword id="KW-0234">DNA repair</keyword>
<comment type="function">
    <text evidence="1">Involved in DNA repair and RecF pathway recombination.</text>
</comment>
<comment type="similarity">
    <text evidence="1">Belongs to the RecO family.</text>
</comment>
<proteinExistence type="inferred from homology"/>
<gene>
    <name evidence="1" type="primary">recO</name>
    <name type="ordered locus">P9303_21431</name>
</gene>
<feature type="chain" id="PRO_1000193411" description="DNA repair protein RecO">
    <location>
        <begin position="1"/>
        <end position="267"/>
    </location>
</feature>
<dbReference type="EMBL" id="CP000554">
    <property type="protein sequence ID" value="ABM78878.1"/>
    <property type="molecule type" value="Genomic_DNA"/>
</dbReference>
<dbReference type="RefSeq" id="WP_011826752.1">
    <property type="nucleotide sequence ID" value="NC_008820.1"/>
</dbReference>
<dbReference type="SMR" id="A2CBL8"/>
<dbReference type="STRING" id="59922.P9303_21431"/>
<dbReference type="KEGG" id="pmf:P9303_21431"/>
<dbReference type="HOGENOM" id="CLU_066632_0_0_3"/>
<dbReference type="BioCyc" id="PMAR59922:G1G80-1871-MONOMER"/>
<dbReference type="Proteomes" id="UP000002274">
    <property type="component" value="Chromosome"/>
</dbReference>
<dbReference type="GO" id="GO:0043590">
    <property type="term" value="C:bacterial nucleoid"/>
    <property type="evidence" value="ECO:0007669"/>
    <property type="project" value="TreeGrafter"/>
</dbReference>
<dbReference type="GO" id="GO:0006310">
    <property type="term" value="P:DNA recombination"/>
    <property type="evidence" value="ECO:0007669"/>
    <property type="project" value="UniProtKB-UniRule"/>
</dbReference>
<dbReference type="GO" id="GO:0006302">
    <property type="term" value="P:double-strand break repair"/>
    <property type="evidence" value="ECO:0007669"/>
    <property type="project" value="TreeGrafter"/>
</dbReference>
<dbReference type="Gene3D" id="2.40.50.140">
    <property type="entry name" value="Nucleic acid-binding proteins"/>
    <property type="match status" value="1"/>
</dbReference>
<dbReference type="Gene3D" id="1.20.1440.120">
    <property type="entry name" value="Recombination protein O, C-terminal domain"/>
    <property type="match status" value="1"/>
</dbReference>
<dbReference type="HAMAP" id="MF_00201">
    <property type="entry name" value="RecO"/>
    <property type="match status" value="1"/>
</dbReference>
<dbReference type="InterPro" id="IPR037278">
    <property type="entry name" value="ARFGAP/RecO"/>
</dbReference>
<dbReference type="InterPro" id="IPR022572">
    <property type="entry name" value="DNA_rep/recomb_RecO_N"/>
</dbReference>
<dbReference type="InterPro" id="IPR012340">
    <property type="entry name" value="NA-bd_OB-fold"/>
</dbReference>
<dbReference type="InterPro" id="IPR003717">
    <property type="entry name" value="RecO"/>
</dbReference>
<dbReference type="InterPro" id="IPR042242">
    <property type="entry name" value="RecO_C"/>
</dbReference>
<dbReference type="NCBIfam" id="TIGR00613">
    <property type="entry name" value="reco"/>
    <property type="match status" value="1"/>
</dbReference>
<dbReference type="PANTHER" id="PTHR33991">
    <property type="entry name" value="DNA REPAIR PROTEIN RECO"/>
    <property type="match status" value="1"/>
</dbReference>
<dbReference type="PANTHER" id="PTHR33991:SF1">
    <property type="entry name" value="DNA REPAIR PROTEIN RECO"/>
    <property type="match status" value="1"/>
</dbReference>
<dbReference type="Pfam" id="PF02565">
    <property type="entry name" value="RecO_C"/>
    <property type="match status" value="1"/>
</dbReference>
<dbReference type="Pfam" id="PF11967">
    <property type="entry name" value="RecO_N"/>
    <property type="match status" value="1"/>
</dbReference>
<dbReference type="SUPFAM" id="SSF57863">
    <property type="entry name" value="ArfGap/RecO-like zinc finger"/>
    <property type="match status" value="1"/>
</dbReference>
<dbReference type="SUPFAM" id="SSF50249">
    <property type="entry name" value="Nucleic acid-binding proteins"/>
    <property type="match status" value="1"/>
</dbReference>